<sequence>MSQNKNTICLFDVDDTLTKPRNAITNEMKELLASLRTKIKIGVVGGSNFNKIKEQLGENFINDFDYVFAENGLIAYKDGSLLEIQDIKKYLGEENIKKFINFVLHYVADLDIPIKRGTFVEFRNGMLNISPIGRNCSQQEREEFEKYDLEHKIRSTMVSILKEEFKSFGLQYSIGGQISFDVFPIGWDKTYCLRHLPEDEFKTLYFFGDKTFLGGNDYEIANHPRITQSFTVKSPANTLAILNDFFFKK</sequence>
<organism>
    <name type="scientific">Dictyostelium discoideum</name>
    <name type="common">Social amoeba</name>
    <dbReference type="NCBI Taxonomy" id="44689"/>
    <lineage>
        <taxon>Eukaryota</taxon>
        <taxon>Amoebozoa</taxon>
        <taxon>Evosea</taxon>
        <taxon>Eumycetozoa</taxon>
        <taxon>Dictyostelia</taxon>
        <taxon>Dictyosteliales</taxon>
        <taxon>Dictyosteliaceae</taxon>
        <taxon>Dictyostelium</taxon>
    </lineage>
</organism>
<reference key="1">
    <citation type="journal article" date="2002" name="Nature">
        <title>Sequence and analysis of chromosome 2 of Dictyostelium discoideum.</title>
        <authorList>
            <person name="Gloeckner G."/>
            <person name="Eichinger L."/>
            <person name="Szafranski K."/>
            <person name="Pachebat J.A."/>
            <person name="Bankier A.T."/>
            <person name="Dear P.H."/>
            <person name="Lehmann R."/>
            <person name="Baumgart C."/>
            <person name="Parra G."/>
            <person name="Abril J.F."/>
            <person name="Guigo R."/>
            <person name="Kumpf K."/>
            <person name="Tunggal B."/>
            <person name="Cox E.C."/>
            <person name="Quail M.A."/>
            <person name="Platzer M."/>
            <person name="Rosenthal A."/>
            <person name="Noegel A.A."/>
        </authorList>
    </citation>
    <scope>NUCLEOTIDE SEQUENCE [LARGE SCALE GENOMIC DNA]</scope>
    <source>
        <strain>AX4</strain>
    </source>
</reference>
<reference key="2">
    <citation type="journal article" date="2005" name="Nature">
        <title>The genome of the social amoeba Dictyostelium discoideum.</title>
        <authorList>
            <person name="Eichinger L."/>
            <person name="Pachebat J.A."/>
            <person name="Gloeckner G."/>
            <person name="Rajandream M.A."/>
            <person name="Sucgang R."/>
            <person name="Berriman M."/>
            <person name="Song J."/>
            <person name="Olsen R."/>
            <person name="Szafranski K."/>
            <person name="Xu Q."/>
            <person name="Tunggal B."/>
            <person name="Kummerfeld S."/>
            <person name="Madera M."/>
            <person name="Konfortov B.A."/>
            <person name="Rivero F."/>
            <person name="Bankier A.T."/>
            <person name="Lehmann R."/>
            <person name="Hamlin N."/>
            <person name="Davies R."/>
            <person name="Gaudet P."/>
            <person name="Fey P."/>
            <person name="Pilcher K."/>
            <person name="Chen G."/>
            <person name="Saunders D."/>
            <person name="Sodergren E.J."/>
            <person name="Davis P."/>
            <person name="Kerhornou A."/>
            <person name="Nie X."/>
            <person name="Hall N."/>
            <person name="Anjard C."/>
            <person name="Hemphill L."/>
            <person name="Bason N."/>
            <person name="Farbrother P."/>
            <person name="Desany B."/>
            <person name="Just E."/>
            <person name="Morio T."/>
            <person name="Rost R."/>
            <person name="Churcher C.M."/>
            <person name="Cooper J."/>
            <person name="Haydock S."/>
            <person name="van Driessche N."/>
            <person name="Cronin A."/>
            <person name="Goodhead I."/>
            <person name="Muzny D.M."/>
            <person name="Mourier T."/>
            <person name="Pain A."/>
            <person name="Lu M."/>
            <person name="Harper D."/>
            <person name="Lindsay R."/>
            <person name="Hauser H."/>
            <person name="James K.D."/>
            <person name="Quiles M."/>
            <person name="Madan Babu M."/>
            <person name="Saito T."/>
            <person name="Buchrieser C."/>
            <person name="Wardroper A."/>
            <person name="Felder M."/>
            <person name="Thangavelu M."/>
            <person name="Johnson D."/>
            <person name="Knights A."/>
            <person name="Loulseged H."/>
            <person name="Mungall K.L."/>
            <person name="Oliver K."/>
            <person name="Price C."/>
            <person name="Quail M.A."/>
            <person name="Urushihara H."/>
            <person name="Hernandez J."/>
            <person name="Rabbinowitsch E."/>
            <person name="Steffen D."/>
            <person name="Sanders M."/>
            <person name="Ma J."/>
            <person name="Kohara Y."/>
            <person name="Sharp S."/>
            <person name="Simmonds M.N."/>
            <person name="Spiegler S."/>
            <person name="Tivey A."/>
            <person name="Sugano S."/>
            <person name="White B."/>
            <person name="Walker D."/>
            <person name="Woodward J.R."/>
            <person name="Winckler T."/>
            <person name="Tanaka Y."/>
            <person name="Shaulsky G."/>
            <person name="Schleicher M."/>
            <person name="Weinstock G.M."/>
            <person name="Rosenthal A."/>
            <person name="Cox E.C."/>
            <person name="Chisholm R.L."/>
            <person name="Gibbs R.A."/>
            <person name="Loomis W.F."/>
            <person name="Platzer M."/>
            <person name="Kay R.R."/>
            <person name="Williams J.G."/>
            <person name="Dear P.H."/>
            <person name="Noegel A.A."/>
            <person name="Barrell B.G."/>
            <person name="Kuspa A."/>
        </authorList>
    </citation>
    <scope>NUCLEOTIDE SEQUENCE [LARGE SCALE GENOMIC DNA]</scope>
    <source>
        <strain>AX4</strain>
    </source>
</reference>
<accession>Q86B09</accession>
<accession>Q1ZXM1</accession>
<proteinExistence type="inferred from homology"/>
<protein>
    <recommendedName>
        <fullName>Phosphomannomutase 2</fullName>
        <shortName>PMM 2</shortName>
        <ecNumber>5.4.2.8</ecNumber>
    </recommendedName>
</protein>
<evidence type="ECO:0000250" key="1"/>
<evidence type="ECO:0000250" key="2">
    <source>
        <dbReference type="UniProtKB" id="P31353"/>
    </source>
</evidence>
<evidence type="ECO:0000250" key="3">
    <source>
        <dbReference type="UniProtKB" id="Q92871"/>
    </source>
</evidence>
<evidence type="ECO:0000305" key="4"/>
<dbReference type="EC" id="5.4.2.8"/>
<dbReference type="EMBL" id="AAFI02000008">
    <property type="protein sequence ID" value="EAS66964.2"/>
    <property type="molecule type" value="Genomic_DNA"/>
</dbReference>
<dbReference type="RefSeq" id="XP_001134630.2">
    <property type="nucleotide sequence ID" value="XM_001134630.2"/>
</dbReference>
<dbReference type="SMR" id="Q86B09"/>
<dbReference type="FunCoup" id="Q86B09">
    <property type="interactions" value="759"/>
</dbReference>
<dbReference type="STRING" id="44689.Q86B09"/>
<dbReference type="PaxDb" id="44689-DDB0231661"/>
<dbReference type="EnsemblProtists" id="EAS66964">
    <property type="protein sequence ID" value="EAS66964"/>
    <property type="gene ID" value="DDB_G0272781"/>
</dbReference>
<dbReference type="GeneID" id="8618643"/>
<dbReference type="KEGG" id="ddi:DDB_G0272781"/>
<dbReference type="dictyBase" id="DDB_G0272781">
    <property type="gene designation" value="pmmB"/>
</dbReference>
<dbReference type="VEuPathDB" id="AmoebaDB:DDB_G0272781"/>
<dbReference type="eggNOG" id="KOG3189">
    <property type="taxonomic scope" value="Eukaryota"/>
</dbReference>
<dbReference type="HOGENOM" id="CLU_065642_0_0_1"/>
<dbReference type="InParanoid" id="Q86B09"/>
<dbReference type="OMA" id="FCLHYMA"/>
<dbReference type="PhylomeDB" id="Q86B09"/>
<dbReference type="Reactome" id="R-DDI-446205">
    <property type="pathway name" value="Synthesis of GDP-mannose"/>
</dbReference>
<dbReference type="UniPathway" id="UPA00126">
    <property type="reaction ID" value="UER00424"/>
</dbReference>
<dbReference type="PRO" id="PR:Q86B09"/>
<dbReference type="Proteomes" id="UP000002195">
    <property type="component" value="Chromosome 2"/>
</dbReference>
<dbReference type="GO" id="GO:0005829">
    <property type="term" value="C:cytosol"/>
    <property type="evidence" value="ECO:0000318"/>
    <property type="project" value="GO_Central"/>
</dbReference>
<dbReference type="GO" id="GO:0046872">
    <property type="term" value="F:metal ion binding"/>
    <property type="evidence" value="ECO:0007669"/>
    <property type="project" value="UniProtKB-KW"/>
</dbReference>
<dbReference type="GO" id="GO:0004615">
    <property type="term" value="F:phosphomannomutase activity"/>
    <property type="evidence" value="ECO:0000318"/>
    <property type="project" value="GO_Central"/>
</dbReference>
<dbReference type="GO" id="GO:0009298">
    <property type="term" value="P:GDP-mannose biosynthetic process"/>
    <property type="evidence" value="ECO:0007669"/>
    <property type="project" value="UniProtKB-UniPathway"/>
</dbReference>
<dbReference type="GO" id="GO:0006013">
    <property type="term" value="P:mannose metabolic process"/>
    <property type="evidence" value="ECO:0000318"/>
    <property type="project" value="GO_Central"/>
</dbReference>
<dbReference type="GO" id="GO:0006487">
    <property type="term" value="P:protein N-linked glycosylation"/>
    <property type="evidence" value="ECO:0000318"/>
    <property type="project" value="GO_Central"/>
</dbReference>
<dbReference type="CDD" id="cd02585">
    <property type="entry name" value="HAD_PMM"/>
    <property type="match status" value="1"/>
</dbReference>
<dbReference type="FunFam" id="3.30.1240.20:FF:000001">
    <property type="entry name" value="Phosphomannomutase"/>
    <property type="match status" value="1"/>
</dbReference>
<dbReference type="Gene3D" id="3.30.1240.20">
    <property type="match status" value="1"/>
</dbReference>
<dbReference type="Gene3D" id="3.40.50.1000">
    <property type="entry name" value="HAD superfamily/HAD-like"/>
    <property type="match status" value="1"/>
</dbReference>
<dbReference type="InterPro" id="IPR036412">
    <property type="entry name" value="HAD-like_sf"/>
</dbReference>
<dbReference type="InterPro" id="IPR006379">
    <property type="entry name" value="HAD-SF_hydro_IIB"/>
</dbReference>
<dbReference type="InterPro" id="IPR023214">
    <property type="entry name" value="HAD_sf"/>
</dbReference>
<dbReference type="InterPro" id="IPR005002">
    <property type="entry name" value="PMM"/>
</dbReference>
<dbReference type="InterPro" id="IPR043169">
    <property type="entry name" value="PMM_cap"/>
</dbReference>
<dbReference type="NCBIfam" id="TIGR01484">
    <property type="entry name" value="HAD-SF-IIB"/>
    <property type="match status" value="1"/>
</dbReference>
<dbReference type="PANTHER" id="PTHR10466">
    <property type="entry name" value="PHOSPHOMANNOMUTASE"/>
    <property type="match status" value="1"/>
</dbReference>
<dbReference type="PANTHER" id="PTHR10466:SF0">
    <property type="entry name" value="PHOSPHOMANNOMUTASE"/>
    <property type="match status" value="1"/>
</dbReference>
<dbReference type="Pfam" id="PF03332">
    <property type="entry name" value="PMM"/>
    <property type="match status" value="1"/>
</dbReference>
<dbReference type="SFLD" id="SFLDF00445">
    <property type="entry name" value="alpha-phosphomannomutase"/>
    <property type="match status" value="1"/>
</dbReference>
<dbReference type="SFLD" id="SFLDS00003">
    <property type="entry name" value="Haloacid_Dehalogenase"/>
    <property type="match status" value="1"/>
</dbReference>
<dbReference type="SUPFAM" id="SSF56784">
    <property type="entry name" value="HAD-like"/>
    <property type="match status" value="1"/>
</dbReference>
<name>PMM2_DICDI</name>
<feature type="chain" id="PRO_0000327517" description="Phosphomannomutase 2">
    <location>
        <begin position="1"/>
        <end position="249"/>
    </location>
</feature>
<feature type="active site" description="Nucleophile" evidence="3">
    <location>
        <position position="12"/>
    </location>
</feature>
<feature type="active site" description="Proton donor/acceptor" evidence="3">
    <location>
        <position position="14"/>
    </location>
</feature>
<feature type="binding site" evidence="3">
    <location>
        <position position="12"/>
    </location>
    <ligand>
        <name>Mg(2+)</name>
        <dbReference type="ChEBI" id="CHEBI:18420"/>
    </ligand>
</feature>
<feature type="binding site" evidence="3">
    <location>
        <position position="14"/>
    </location>
    <ligand>
        <name>Mg(2+)</name>
        <dbReference type="ChEBI" id="CHEBI:18420"/>
    </ligand>
</feature>
<feature type="binding site" evidence="3">
    <location>
        <position position="21"/>
    </location>
    <ligand>
        <name>alpha-D-mannose 1-phosphate</name>
        <dbReference type="ChEBI" id="CHEBI:58409"/>
    </ligand>
</feature>
<feature type="binding site" evidence="3">
    <location>
        <position position="123"/>
    </location>
    <ligand>
        <name>alpha-D-mannose 1-phosphate</name>
        <dbReference type="ChEBI" id="CHEBI:58409"/>
    </ligand>
</feature>
<feature type="binding site" evidence="3">
    <location>
        <position position="134"/>
    </location>
    <ligand>
        <name>alpha-D-mannose 1-phosphate</name>
        <dbReference type="ChEBI" id="CHEBI:58409"/>
    </ligand>
</feature>
<feature type="binding site" evidence="3">
    <location>
        <position position="141"/>
    </location>
    <ligand>
        <name>alpha-D-mannose 1-phosphate</name>
        <dbReference type="ChEBI" id="CHEBI:58409"/>
    </ligand>
</feature>
<feature type="binding site" evidence="3">
    <location>
        <position position="179"/>
    </location>
    <ligand>
        <name>alpha-D-mannose 1-phosphate</name>
        <dbReference type="ChEBI" id="CHEBI:58409"/>
    </ligand>
</feature>
<feature type="binding site" evidence="3">
    <location>
        <position position="181"/>
    </location>
    <ligand>
        <name>alpha-D-mannose 1-phosphate</name>
        <dbReference type="ChEBI" id="CHEBI:58409"/>
    </ligand>
</feature>
<feature type="binding site" evidence="2">
    <location>
        <position position="209"/>
    </location>
    <ligand>
        <name>Mg(2+)</name>
        <dbReference type="ChEBI" id="CHEBI:18420"/>
    </ligand>
</feature>
<gene>
    <name type="primary">pmmB</name>
    <name type="ORF">DDB_G0272781</name>
</gene>
<comment type="function">
    <text evidence="1">Involved in the synthesis of the GDP-mannose and dolichol-phosphate-mannose required for a number of critical mannosyl transfer reactions.</text>
</comment>
<comment type="catalytic activity">
    <reaction>
        <text>alpha-D-mannose 1-phosphate = D-mannose 6-phosphate</text>
        <dbReference type="Rhea" id="RHEA:11140"/>
        <dbReference type="ChEBI" id="CHEBI:58409"/>
        <dbReference type="ChEBI" id="CHEBI:58735"/>
        <dbReference type="EC" id="5.4.2.8"/>
    </reaction>
</comment>
<comment type="pathway">
    <text>Nucleotide-sugar biosynthesis; GDP-alpha-D-mannose biosynthesis; alpha-D-mannose 1-phosphate from D-fructose 6-phosphate: step 2/2.</text>
</comment>
<comment type="subunit">
    <text evidence="1">Homodimer.</text>
</comment>
<comment type="subcellular location">
    <subcellularLocation>
        <location evidence="1">Cytoplasm</location>
    </subcellularLocation>
</comment>
<comment type="similarity">
    <text evidence="4">Belongs to the eukaryotic PMM family.</text>
</comment>
<keyword id="KW-0963">Cytoplasm</keyword>
<keyword id="KW-0413">Isomerase</keyword>
<keyword id="KW-0460">Magnesium</keyword>
<keyword id="KW-0479">Metal-binding</keyword>
<keyword id="KW-1185">Reference proteome</keyword>